<keyword id="KW-0687">Ribonucleoprotein</keyword>
<keyword id="KW-0689">Ribosomal protein</keyword>
<keyword id="KW-0694">RNA-binding</keyword>
<keyword id="KW-0699">rRNA-binding</keyword>
<accession>Q5X4X0</accession>
<gene>
    <name evidence="1" type="primary">rpsF</name>
    <name type="ordered locus">lpp1550</name>
</gene>
<feature type="chain" id="PRO_0000176782" description="Small ribosomal subunit protein bS6">
    <location>
        <begin position="1"/>
        <end position="112"/>
    </location>
</feature>
<reference key="1">
    <citation type="journal article" date="2004" name="Nat. Genet.">
        <title>Evidence in the Legionella pneumophila genome for exploitation of host cell functions and high genome plasticity.</title>
        <authorList>
            <person name="Cazalet C."/>
            <person name="Rusniok C."/>
            <person name="Brueggemann H."/>
            <person name="Zidane N."/>
            <person name="Magnier A."/>
            <person name="Ma L."/>
            <person name="Tichit M."/>
            <person name="Jarraud S."/>
            <person name="Bouchier C."/>
            <person name="Vandenesch F."/>
            <person name="Kunst F."/>
            <person name="Etienne J."/>
            <person name="Glaser P."/>
            <person name="Buchrieser C."/>
        </authorList>
    </citation>
    <scope>NUCLEOTIDE SEQUENCE [LARGE SCALE GENOMIC DNA]</scope>
    <source>
        <strain>Paris</strain>
    </source>
</reference>
<dbReference type="EMBL" id="CR628336">
    <property type="protein sequence ID" value="CAH12701.1"/>
    <property type="molecule type" value="Genomic_DNA"/>
</dbReference>
<dbReference type="RefSeq" id="WP_010947321.1">
    <property type="nucleotide sequence ID" value="NC_006368.1"/>
</dbReference>
<dbReference type="SMR" id="Q5X4X0"/>
<dbReference type="GeneID" id="57035583"/>
<dbReference type="KEGG" id="lpp:lpp1550"/>
<dbReference type="LegioList" id="lpp1550"/>
<dbReference type="HOGENOM" id="CLU_113441_6_1_6"/>
<dbReference type="GO" id="GO:0022627">
    <property type="term" value="C:cytosolic small ribosomal subunit"/>
    <property type="evidence" value="ECO:0007669"/>
    <property type="project" value="TreeGrafter"/>
</dbReference>
<dbReference type="GO" id="GO:0070181">
    <property type="term" value="F:small ribosomal subunit rRNA binding"/>
    <property type="evidence" value="ECO:0007669"/>
    <property type="project" value="TreeGrafter"/>
</dbReference>
<dbReference type="GO" id="GO:0003735">
    <property type="term" value="F:structural constituent of ribosome"/>
    <property type="evidence" value="ECO:0007669"/>
    <property type="project" value="InterPro"/>
</dbReference>
<dbReference type="GO" id="GO:0006412">
    <property type="term" value="P:translation"/>
    <property type="evidence" value="ECO:0007669"/>
    <property type="project" value="UniProtKB-UniRule"/>
</dbReference>
<dbReference type="CDD" id="cd00473">
    <property type="entry name" value="bS6"/>
    <property type="match status" value="1"/>
</dbReference>
<dbReference type="Gene3D" id="3.30.70.60">
    <property type="match status" value="1"/>
</dbReference>
<dbReference type="HAMAP" id="MF_00360">
    <property type="entry name" value="Ribosomal_bS6"/>
    <property type="match status" value="1"/>
</dbReference>
<dbReference type="InterPro" id="IPR000529">
    <property type="entry name" value="Ribosomal_bS6"/>
</dbReference>
<dbReference type="InterPro" id="IPR020815">
    <property type="entry name" value="Ribosomal_bS6_CS"/>
</dbReference>
<dbReference type="InterPro" id="IPR035980">
    <property type="entry name" value="Ribosomal_bS6_sf"/>
</dbReference>
<dbReference type="InterPro" id="IPR020814">
    <property type="entry name" value="Ribosomal_S6_plastid/chlpt"/>
</dbReference>
<dbReference type="InterPro" id="IPR014717">
    <property type="entry name" value="Transl_elong_EF1B/ribsomal_bS6"/>
</dbReference>
<dbReference type="NCBIfam" id="TIGR00166">
    <property type="entry name" value="S6"/>
    <property type="match status" value="1"/>
</dbReference>
<dbReference type="PANTHER" id="PTHR21011">
    <property type="entry name" value="MITOCHONDRIAL 28S RIBOSOMAL PROTEIN S6"/>
    <property type="match status" value="1"/>
</dbReference>
<dbReference type="PANTHER" id="PTHR21011:SF1">
    <property type="entry name" value="SMALL RIBOSOMAL SUBUNIT PROTEIN BS6M"/>
    <property type="match status" value="1"/>
</dbReference>
<dbReference type="Pfam" id="PF01250">
    <property type="entry name" value="Ribosomal_S6"/>
    <property type="match status" value="1"/>
</dbReference>
<dbReference type="SUPFAM" id="SSF54995">
    <property type="entry name" value="Ribosomal protein S6"/>
    <property type="match status" value="1"/>
</dbReference>
<dbReference type="PROSITE" id="PS01048">
    <property type="entry name" value="RIBOSOMAL_S6"/>
    <property type="match status" value="1"/>
</dbReference>
<evidence type="ECO:0000255" key="1">
    <source>
        <dbReference type="HAMAP-Rule" id="MF_00360"/>
    </source>
</evidence>
<evidence type="ECO:0000305" key="2"/>
<name>RS6_LEGPA</name>
<proteinExistence type="inferred from homology"/>
<protein>
    <recommendedName>
        <fullName evidence="1">Small ribosomal subunit protein bS6</fullName>
    </recommendedName>
    <alternativeName>
        <fullName evidence="2">30S ribosomal protein S6</fullName>
    </alternativeName>
</protein>
<sequence>MRHYEIMFLVHPDQSEQVPGMVERYEGIITKHNGKIHRKEDLGRRQLAYSINKVHKAHYILMNVECNLDALNEIKNAFKFNDAILRHLITVQKQAITTESVLMKKEKETKVA</sequence>
<organism>
    <name type="scientific">Legionella pneumophila (strain Paris)</name>
    <dbReference type="NCBI Taxonomy" id="297246"/>
    <lineage>
        <taxon>Bacteria</taxon>
        <taxon>Pseudomonadati</taxon>
        <taxon>Pseudomonadota</taxon>
        <taxon>Gammaproteobacteria</taxon>
        <taxon>Legionellales</taxon>
        <taxon>Legionellaceae</taxon>
        <taxon>Legionella</taxon>
    </lineage>
</organism>
<comment type="function">
    <text evidence="1">Binds together with bS18 to 16S ribosomal RNA.</text>
</comment>
<comment type="similarity">
    <text evidence="1">Belongs to the bacterial ribosomal protein bS6 family.</text>
</comment>